<comment type="function">
    <text evidence="2 7">Sulfate transporter which mediates sulfate uptake into chondrocytes in order to maintain adequate sulfation of proteoglycans which is needed for cartilage development (PubMed:9575183). Mediates electroneutral anion exchange of sulfate ions for oxalate ions, sulfate and oxalate ions for chloride and/or hydroxyl ions and chloride ions for bromide, iodide and nitrate ions (By similarity). The coupling of sulfate transport to both hydroxyl and chloride ions likely serves to ensure transport at both acidic pH when most sulfate uptake is mediated by sulfate-hydroxide exchange and alkaline pH when most sulfate uptake is mediated by sulfate-chloride exchange (By similarity). Essential for chondrocyte proliferation, differentiation and cell size expansion (By similarity).</text>
</comment>
<comment type="catalytic activity">
    <reaction evidence="2">
        <text>oxalate(in) + sulfate(out) = oxalate(out) + sulfate(in)</text>
        <dbReference type="Rhea" id="RHEA:72275"/>
        <dbReference type="ChEBI" id="CHEBI:16189"/>
        <dbReference type="ChEBI" id="CHEBI:30623"/>
    </reaction>
</comment>
<comment type="catalytic activity">
    <reaction evidence="2">
        <text>sulfate(out) + 2 chloride(in) = sulfate(in) + 2 chloride(out)</text>
        <dbReference type="Rhea" id="RHEA:75091"/>
        <dbReference type="ChEBI" id="CHEBI:16189"/>
        <dbReference type="ChEBI" id="CHEBI:17996"/>
    </reaction>
</comment>
<comment type="catalytic activity">
    <reaction evidence="2">
        <text>oxalate(out) + 2 chloride(in) = oxalate(in) + 2 chloride(out)</text>
        <dbReference type="Rhea" id="RHEA:75095"/>
        <dbReference type="ChEBI" id="CHEBI:17996"/>
        <dbReference type="ChEBI" id="CHEBI:30623"/>
    </reaction>
</comment>
<comment type="catalytic activity">
    <reaction evidence="2">
        <text>bromide(in) + chloride(out) = bromide(out) + chloride(in)</text>
        <dbReference type="Rhea" id="RHEA:75335"/>
        <dbReference type="ChEBI" id="CHEBI:15858"/>
        <dbReference type="ChEBI" id="CHEBI:17996"/>
    </reaction>
</comment>
<comment type="catalytic activity">
    <reaction evidence="2">
        <text>nitrate(in) + chloride(out) = nitrate(out) + chloride(in)</text>
        <dbReference type="Rhea" id="RHEA:75339"/>
        <dbReference type="ChEBI" id="CHEBI:17632"/>
        <dbReference type="ChEBI" id="CHEBI:17996"/>
    </reaction>
</comment>
<comment type="catalytic activity">
    <reaction evidence="2">
        <text>iodide(in) + chloride(out) = iodide(out) + chloride(in)</text>
        <dbReference type="Rhea" id="RHEA:72379"/>
        <dbReference type="ChEBI" id="CHEBI:16382"/>
        <dbReference type="ChEBI" id="CHEBI:17996"/>
    </reaction>
</comment>
<comment type="subcellular location">
    <subcellularLocation>
        <location evidence="7">Cell membrane</location>
        <topology evidence="3">Multi-pass membrane protein</topology>
    </subcellularLocation>
    <subcellularLocation>
        <location evidence="6">Apical cell membrane</location>
        <topology evidence="3">Multi-pass membrane protein</topology>
    </subcellularLocation>
</comment>
<comment type="tissue specificity">
    <text evidence="6 7">Cartilage and intestine (PubMed:9575183). Expressed in the kidney (at protein level) (PubMed:20369363).</text>
</comment>
<comment type="PTM">
    <text evidence="1">N-glycosylated.</text>
</comment>
<comment type="similarity">
    <text evidence="8">Belongs to the SLC26A/SulP transporter (TC 2.A.53) family.</text>
</comment>
<reference key="1">
    <citation type="journal article" date="1998" name="J. Biol. Chem.">
        <title>Functional analysis of diastrophic dysplasia sulfate transporter. Its involvement in growth regulation of chondrocytes mediated by sulfated proteoglycans.</title>
        <authorList>
            <person name="Satoh H."/>
            <person name="Susaki M."/>
            <person name="Shukunami C."/>
            <person name="Iyama K."/>
            <person name="Negoro T."/>
            <person name="Hiraki Y."/>
        </authorList>
    </citation>
    <scope>NUCLEOTIDE SEQUENCE [MRNA]</scope>
    <scope>FUNCTION</scope>
    <scope>SUBCELLULAR LOCATION</scope>
    <scope>TISSUE SPECIFICITY</scope>
    <source>
        <tissue>Osteosarcoma</tissue>
    </source>
</reference>
<reference key="2">
    <citation type="journal article" date="2010" name="Histochem. Cell Biol.">
        <title>Protein localization of SLC26A2 (DTDST) in rat kidney.</title>
        <authorList>
            <person name="Chapman J.M."/>
            <person name="Karniski L.P."/>
        </authorList>
    </citation>
    <scope>SUBCELLULAR LOCATION</scope>
    <scope>TISSUE SPECIFICITY</scope>
</reference>
<organism>
    <name type="scientific">Rattus norvegicus</name>
    <name type="common">Rat</name>
    <dbReference type="NCBI Taxonomy" id="10116"/>
    <lineage>
        <taxon>Eukaryota</taxon>
        <taxon>Metazoa</taxon>
        <taxon>Chordata</taxon>
        <taxon>Craniata</taxon>
        <taxon>Vertebrata</taxon>
        <taxon>Euteleostomi</taxon>
        <taxon>Mammalia</taxon>
        <taxon>Eutheria</taxon>
        <taxon>Euarchontoglires</taxon>
        <taxon>Glires</taxon>
        <taxon>Rodentia</taxon>
        <taxon>Myomorpha</taxon>
        <taxon>Muroidea</taxon>
        <taxon>Muridae</taxon>
        <taxon>Murinae</taxon>
        <taxon>Rattus</taxon>
    </lineage>
</organism>
<accession>O70531</accession>
<protein>
    <recommendedName>
        <fullName>Sulfate transporter</fullName>
    </recommendedName>
    <alternativeName>
        <fullName>Diastrophic dysplasia protein homolog</fullName>
    </alternativeName>
    <alternativeName>
        <fullName>Solute carrier family 26 member 2</fullName>
    </alternativeName>
</protein>
<gene>
    <name type="primary">Slc26a2</name>
    <name type="synonym">Dtdst</name>
</gene>
<dbReference type="EMBL" id="D82883">
    <property type="protein sequence ID" value="BAA25987.1"/>
    <property type="molecule type" value="mRNA"/>
</dbReference>
<dbReference type="RefSeq" id="NP_001420402.1">
    <property type="nucleotide sequence ID" value="NM_001433473.1"/>
</dbReference>
<dbReference type="RefSeq" id="NP_476468.1">
    <property type="nucleotide sequence ID" value="NM_057127.2"/>
</dbReference>
<dbReference type="RefSeq" id="XP_006254849.1">
    <property type="nucleotide sequence ID" value="XM_006254787.2"/>
</dbReference>
<dbReference type="RefSeq" id="XP_006254850.1">
    <property type="nucleotide sequence ID" value="XM_006254788.4"/>
</dbReference>
<dbReference type="RefSeq" id="XP_017456324.1">
    <property type="nucleotide sequence ID" value="XM_017600835.1"/>
</dbReference>
<dbReference type="RefSeq" id="XP_063133149.1">
    <property type="nucleotide sequence ID" value="XM_063277079.1"/>
</dbReference>
<dbReference type="SMR" id="O70531"/>
<dbReference type="FunCoup" id="O70531">
    <property type="interactions" value="862"/>
</dbReference>
<dbReference type="STRING" id="10116.ENSRNOP00000024374"/>
<dbReference type="GlyCosmos" id="O70531">
    <property type="glycosylation" value="2 sites, No reported glycans"/>
</dbReference>
<dbReference type="GlyGen" id="O70531">
    <property type="glycosylation" value="2 sites"/>
</dbReference>
<dbReference type="PhosphoSitePlus" id="O70531"/>
<dbReference type="PaxDb" id="10116-ENSRNOP00000024374"/>
<dbReference type="Ensembl" id="ENSRNOT00000024374.3">
    <property type="protein sequence ID" value="ENSRNOP00000024374.1"/>
    <property type="gene ID" value="ENSRNOG00000018082.3"/>
</dbReference>
<dbReference type="GeneID" id="117267"/>
<dbReference type="KEGG" id="rno:117267"/>
<dbReference type="UCSC" id="RGD:620622">
    <property type="organism name" value="rat"/>
</dbReference>
<dbReference type="AGR" id="RGD:620622"/>
<dbReference type="CTD" id="1836"/>
<dbReference type="RGD" id="620622">
    <property type="gene designation" value="Slc26a2"/>
</dbReference>
<dbReference type="eggNOG" id="KOG0236">
    <property type="taxonomic scope" value="Eukaryota"/>
</dbReference>
<dbReference type="GeneTree" id="ENSGT01120000271864"/>
<dbReference type="HOGENOM" id="CLU_003182_9_4_1"/>
<dbReference type="InParanoid" id="O70531"/>
<dbReference type="OMA" id="PALYWIP"/>
<dbReference type="OrthoDB" id="288203at2759"/>
<dbReference type="PhylomeDB" id="O70531"/>
<dbReference type="TreeFam" id="TF313784"/>
<dbReference type="Reactome" id="R-RNO-174362">
    <property type="pathway name" value="Transport and synthesis of PAPS"/>
</dbReference>
<dbReference type="Reactome" id="R-RNO-427601">
    <property type="pathway name" value="Multifunctional anion exchangers"/>
</dbReference>
<dbReference type="PRO" id="PR:O70531"/>
<dbReference type="Proteomes" id="UP000002494">
    <property type="component" value="Chromosome 18"/>
</dbReference>
<dbReference type="Bgee" id="ENSRNOG00000018082">
    <property type="expression patterns" value="Expressed in jejunum and 18 other cell types or tissues"/>
</dbReference>
<dbReference type="GO" id="GO:0016324">
    <property type="term" value="C:apical plasma membrane"/>
    <property type="evidence" value="ECO:0000314"/>
    <property type="project" value="RGD"/>
</dbReference>
<dbReference type="GO" id="GO:0031528">
    <property type="term" value="C:microvillus membrane"/>
    <property type="evidence" value="ECO:0000314"/>
    <property type="project" value="RGD"/>
</dbReference>
<dbReference type="GO" id="GO:0005886">
    <property type="term" value="C:plasma membrane"/>
    <property type="evidence" value="ECO:0000250"/>
    <property type="project" value="UniProtKB"/>
</dbReference>
<dbReference type="GO" id="GO:0015106">
    <property type="term" value="F:bicarbonate transmembrane transporter activity"/>
    <property type="evidence" value="ECO:0000318"/>
    <property type="project" value="GO_Central"/>
</dbReference>
<dbReference type="GO" id="GO:0015108">
    <property type="term" value="F:chloride transmembrane transporter activity"/>
    <property type="evidence" value="ECO:0000318"/>
    <property type="project" value="GO_Central"/>
</dbReference>
<dbReference type="GO" id="GO:0019531">
    <property type="term" value="F:oxalate transmembrane transporter activity"/>
    <property type="evidence" value="ECO:0000318"/>
    <property type="project" value="GO_Central"/>
</dbReference>
<dbReference type="GO" id="GO:0008271">
    <property type="term" value="F:secondary active sulfate transmembrane transporter activity"/>
    <property type="evidence" value="ECO:0007669"/>
    <property type="project" value="InterPro"/>
</dbReference>
<dbReference type="GO" id="GO:0005452">
    <property type="term" value="F:solute:inorganic anion antiporter activity"/>
    <property type="evidence" value="ECO:0000266"/>
    <property type="project" value="RGD"/>
</dbReference>
<dbReference type="GO" id="GO:0015116">
    <property type="term" value="F:sulfate transmembrane transporter activity"/>
    <property type="evidence" value="ECO:0000266"/>
    <property type="project" value="RGD"/>
</dbReference>
<dbReference type="GO" id="GO:1902476">
    <property type="term" value="P:chloride transmembrane transport"/>
    <property type="evidence" value="ECO:0000318"/>
    <property type="project" value="GO_Central"/>
</dbReference>
<dbReference type="GO" id="GO:0002062">
    <property type="term" value="P:chondrocyte differentiation"/>
    <property type="evidence" value="ECO:0000250"/>
    <property type="project" value="UniProtKB"/>
</dbReference>
<dbReference type="GO" id="GO:0035988">
    <property type="term" value="P:chondrocyte proliferation"/>
    <property type="evidence" value="ECO:0000250"/>
    <property type="project" value="UniProtKB"/>
</dbReference>
<dbReference type="GO" id="GO:1902358">
    <property type="term" value="P:sulfate transmembrane transport"/>
    <property type="evidence" value="ECO:0000314"/>
    <property type="project" value="RGD"/>
</dbReference>
<dbReference type="FunFam" id="3.30.750.24:FF:000015">
    <property type="entry name" value="Sulfate transporter"/>
    <property type="match status" value="1"/>
</dbReference>
<dbReference type="Gene3D" id="3.30.750.24">
    <property type="entry name" value="STAS domain"/>
    <property type="match status" value="1"/>
</dbReference>
<dbReference type="InterPro" id="IPR018045">
    <property type="entry name" value="S04_transporter_CS"/>
</dbReference>
<dbReference type="InterPro" id="IPR011547">
    <property type="entry name" value="SLC26A/SulP_dom"/>
</dbReference>
<dbReference type="InterPro" id="IPR001902">
    <property type="entry name" value="SLC26A/SulP_fam"/>
</dbReference>
<dbReference type="InterPro" id="IPR002645">
    <property type="entry name" value="STAS_dom"/>
</dbReference>
<dbReference type="InterPro" id="IPR036513">
    <property type="entry name" value="STAS_dom_sf"/>
</dbReference>
<dbReference type="NCBIfam" id="TIGR00815">
    <property type="entry name" value="sulP"/>
    <property type="match status" value="1"/>
</dbReference>
<dbReference type="PANTHER" id="PTHR11814">
    <property type="entry name" value="SULFATE TRANSPORTER"/>
    <property type="match status" value="1"/>
</dbReference>
<dbReference type="Pfam" id="PF01740">
    <property type="entry name" value="STAS"/>
    <property type="match status" value="1"/>
</dbReference>
<dbReference type="Pfam" id="PF00916">
    <property type="entry name" value="Sulfate_transp"/>
    <property type="match status" value="1"/>
</dbReference>
<dbReference type="SUPFAM" id="SSF52091">
    <property type="entry name" value="SpoIIaa-like"/>
    <property type="match status" value="1"/>
</dbReference>
<dbReference type="PROSITE" id="PS01130">
    <property type="entry name" value="SLC26A"/>
    <property type="match status" value="1"/>
</dbReference>
<dbReference type="PROSITE" id="PS50801">
    <property type="entry name" value="STAS"/>
    <property type="match status" value="1"/>
</dbReference>
<name>S26A2_RAT</name>
<keyword id="KW-1003">Cell membrane</keyword>
<keyword id="KW-0325">Glycoprotein</keyword>
<keyword id="KW-0472">Membrane</keyword>
<keyword id="KW-0597">Phosphoprotein</keyword>
<keyword id="KW-1185">Reference proteome</keyword>
<keyword id="KW-0812">Transmembrane</keyword>
<keyword id="KW-1133">Transmembrane helix</keyword>
<keyword id="KW-0813">Transport</keyword>
<sequence length="739" mass="82028">MSSENKEQHNLSPRDLPEEAYGFPPELPLGAQRGSSTDLRQFEPSDRRRAFRRIHMELHEKPDTNIRQLVMRKLQKSCQCNATKIRNRIFDFFPVLRWLPKYDLKKNILGDMMSGLIVGILLVPQSIAYSLLAGQEPIYGLYTSFFASIIYFLFGTSRHISVGIFGILCLMIGEVVDRELHKACPDIDTTSSSIAMFSNGCVVVNHTLDGLCDKSCYAIKIGSTVTFMAGVYQVAMGFFQVGFVSVYLSDALLSGFVTGASFTILTSQAKYLLGLSLPRSNGVGSVITTWIHIFRNIHKTNICDLITSLLCLLVLVPTKELNEYFKSKLPAPIPTELIVVVAATLASHFGKLNENYNSSIAGQIPTGFMPPQAPDWSLIPNVAVDAIAISIIGFAITVSLSEMFAKKHGYTVKANQEMYAIGFCNIIPSFFHCITTSAALAKTLVKESTGCQTQLSAIVTSLVLLLVLLLIAPLFYSLQKCVLGVITIVNLRGALLKFRDLPKMWRLSRMDTVIWFVTMLSSALLSTEIGLLVGVCFSMFCVILRTQMPKISLLGLEEESEIFESISTYKNLRSKSGIKVFRFIAPLYYINKECFKSALYKKTLNPVLVKAAWKKAAKRKLKEETVTFHGDPDEVSMQLSHDPLELHTVVIDCSAIQFLDTAGIHTLKEVRRDYEAIGIQVLLAQCNPSVRDSLAKGEYCKKEEENLLFYSLSEAVAFAEESQKEKGVCVVNGLSLSGD</sequence>
<feature type="chain" id="PRO_0000080160" description="Sulfate transporter">
    <location>
        <begin position="1"/>
        <end position="739"/>
    </location>
</feature>
<feature type="transmembrane region" description="Helical" evidence="3">
    <location>
        <begin position="112"/>
        <end position="132"/>
    </location>
</feature>
<feature type="transmembrane region" description="Helical" evidence="3">
    <location>
        <begin position="137"/>
        <end position="157"/>
    </location>
</feature>
<feature type="transmembrane region" description="Helical" evidence="3">
    <location>
        <begin position="227"/>
        <end position="247"/>
    </location>
</feature>
<feature type="transmembrane region" description="Helical" evidence="3">
    <location>
        <begin position="255"/>
        <end position="275"/>
    </location>
</feature>
<feature type="transmembrane region" description="Helical" evidence="3">
    <location>
        <begin position="378"/>
        <end position="398"/>
    </location>
</feature>
<feature type="transmembrane region" description="Helical" evidence="3">
    <location>
        <begin position="420"/>
        <end position="440"/>
    </location>
</feature>
<feature type="transmembrane region" description="Helical" evidence="3">
    <location>
        <begin position="455"/>
        <end position="475"/>
    </location>
</feature>
<feature type="transmembrane region" description="Helical" evidence="3">
    <location>
        <begin position="524"/>
        <end position="544"/>
    </location>
</feature>
<feature type="domain" description="STAS" evidence="4">
    <location>
        <begin position="568"/>
        <end position="719"/>
    </location>
</feature>
<feature type="region of interest" description="Disordered" evidence="5">
    <location>
        <begin position="1"/>
        <end position="44"/>
    </location>
</feature>
<feature type="modified residue" description="Phosphoserine" evidence="1">
    <location>
        <position position="12"/>
    </location>
</feature>
<feature type="glycosylation site" description="N-linked (GlcNAc...) asparagine" evidence="3">
    <location>
        <position position="205"/>
    </location>
</feature>
<feature type="glycosylation site" description="N-linked (GlcNAc...) asparagine" evidence="3">
    <location>
        <position position="357"/>
    </location>
</feature>
<evidence type="ECO:0000250" key="1">
    <source>
        <dbReference type="UniProtKB" id="P50443"/>
    </source>
</evidence>
<evidence type="ECO:0000250" key="2">
    <source>
        <dbReference type="UniProtKB" id="Q62273"/>
    </source>
</evidence>
<evidence type="ECO:0000255" key="3"/>
<evidence type="ECO:0000255" key="4">
    <source>
        <dbReference type="PROSITE-ProRule" id="PRU00198"/>
    </source>
</evidence>
<evidence type="ECO:0000256" key="5">
    <source>
        <dbReference type="SAM" id="MobiDB-lite"/>
    </source>
</evidence>
<evidence type="ECO:0000269" key="6">
    <source>
    </source>
</evidence>
<evidence type="ECO:0000269" key="7">
    <source>
    </source>
</evidence>
<evidence type="ECO:0000305" key="8"/>
<proteinExistence type="evidence at protein level"/>